<organism>
    <name type="scientific">Shigella boydii serotype 4 (strain Sb227)</name>
    <dbReference type="NCBI Taxonomy" id="300268"/>
    <lineage>
        <taxon>Bacteria</taxon>
        <taxon>Pseudomonadati</taxon>
        <taxon>Pseudomonadota</taxon>
        <taxon>Gammaproteobacteria</taxon>
        <taxon>Enterobacterales</taxon>
        <taxon>Enterobacteriaceae</taxon>
        <taxon>Shigella</taxon>
    </lineage>
</organism>
<reference key="1">
    <citation type="journal article" date="2005" name="Nucleic Acids Res.">
        <title>Genome dynamics and diversity of Shigella species, the etiologic agents of bacillary dysentery.</title>
        <authorList>
            <person name="Yang F."/>
            <person name="Yang J."/>
            <person name="Zhang X."/>
            <person name="Chen L."/>
            <person name="Jiang Y."/>
            <person name="Yan Y."/>
            <person name="Tang X."/>
            <person name="Wang J."/>
            <person name="Xiong Z."/>
            <person name="Dong J."/>
            <person name="Xue Y."/>
            <person name="Zhu Y."/>
            <person name="Xu X."/>
            <person name="Sun L."/>
            <person name="Chen S."/>
            <person name="Nie H."/>
            <person name="Peng J."/>
            <person name="Xu J."/>
            <person name="Wang Y."/>
            <person name="Yuan Z."/>
            <person name="Wen Y."/>
            <person name="Yao Z."/>
            <person name="Shen Y."/>
            <person name="Qiang B."/>
            <person name="Hou Y."/>
            <person name="Yu J."/>
            <person name="Jin Q."/>
        </authorList>
    </citation>
    <scope>NUCLEOTIDE SEQUENCE [LARGE SCALE GENOMIC DNA]</scope>
    <source>
        <strain>Sb227</strain>
    </source>
</reference>
<name>GLGB_SHIBS</name>
<sequence length="728" mass="84327">MSDRIDRDVINALIAGHFADPFSVLGMHKTTAGLEVRALLPDATDVWVIEPKTGRKLAKLECLDSRGFFSGVIPRRKNFFRYQLAVVWHGQQNLIDDPYRFGPLIQEMDAWLLSEGTHLRPYETLGAHADTMDGVTGTRFSVWAPNARRVSVVGQFNYWDGRRHPMRLRKESGIWELFIPGAHNGQLYKYEMIDANGNLRLKSDPYAFEAQMRPETASLICGLPEKVVQTEERKKANQFDASISIYEVHLGSWRRHTDNNFWLSYRELADQLVPYAKWMGFTHLELLPINEHPFDGSWGYQPTGLYAPTRRFGTRDDFRYFIDAAHAAGLNVILDWVPGHFPTDDFALAEFDGTNLYEHSDPREGYHQDWNTLIYNYGRREVSNFLVGNALYWIERFGIDALRVDAVASMIYRDYSRKEGEWIPNEFGGRENLEAIEFLRNTNRILGEQVSGAVTMAEESTDFPGVSRPQDMGGLGFWYKWNLGWMHDTLDYMKLDPVYRQYHHDKLTFGILYNYTENFVLPLSHDEVVHGKKSILDRMPGDAWQKFANLRAYYGWMWAFPGKKLLFMGNEFAQGREWNHDASLDWHLLEGGDNWHHGVQRLVRDLNLTYRHHKAMHELDFDPYGFEWLVVDDKERSVLIFVRRDKEGNEIIVASNFTPVPRHDYRFGINQPGKWREILNTDSMHYHGSNAGNGGTVHSDEIASHGRQHSLSLTLPPLATIWLVREAE</sequence>
<feature type="chain" id="PRO_0000260701" description="1,4-alpha-glucan branching enzyme GlgB">
    <location>
        <begin position="1"/>
        <end position="728"/>
    </location>
</feature>
<feature type="active site" description="Nucleophile" evidence="1">
    <location>
        <position position="405"/>
    </location>
</feature>
<feature type="active site" description="Proton donor" evidence="1">
    <location>
        <position position="458"/>
    </location>
</feature>
<comment type="function">
    <text evidence="1">Catalyzes the formation of the alpha-1,6-glucosidic linkages in glycogen by scission of a 1,4-alpha-linked oligosaccharide from growing alpha-1,4-glucan chains and the subsequent attachment of the oligosaccharide to the alpha-1,6 position.</text>
</comment>
<comment type="catalytic activity">
    <reaction evidence="1">
        <text>Transfers a segment of a (1-&gt;4)-alpha-D-glucan chain to a primary hydroxy group in a similar glucan chain.</text>
        <dbReference type="EC" id="2.4.1.18"/>
    </reaction>
</comment>
<comment type="pathway">
    <text evidence="1">Glycan biosynthesis; glycogen biosynthesis.</text>
</comment>
<comment type="subunit">
    <text evidence="1">Monomer.</text>
</comment>
<comment type="similarity">
    <text evidence="1">Belongs to the glycosyl hydrolase 13 family. GlgB subfamily.</text>
</comment>
<accession>Q31VJ1</accession>
<keyword id="KW-0119">Carbohydrate metabolism</keyword>
<keyword id="KW-0320">Glycogen biosynthesis</keyword>
<keyword id="KW-0321">Glycogen metabolism</keyword>
<keyword id="KW-0328">Glycosyltransferase</keyword>
<keyword id="KW-0808">Transferase</keyword>
<proteinExistence type="inferred from homology"/>
<evidence type="ECO:0000255" key="1">
    <source>
        <dbReference type="HAMAP-Rule" id="MF_00685"/>
    </source>
</evidence>
<protein>
    <recommendedName>
        <fullName evidence="1">1,4-alpha-glucan branching enzyme GlgB</fullName>
        <ecNumber evidence="1">2.4.1.18</ecNumber>
    </recommendedName>
    <alternativeName>
        <fullName evidence="1">1,4-alpha-D-glucan:1,4-alpha-D-glucan 6-glucosyl-transferase</fullName>
    </alternativeName>
    <alternativeName>
        <fullName evidence="1">Alpha-(1-&gt;4)-glucan branching enzyme</fullName>
    </alternativeName>
    <alternativeName>
        <fullName evidence="1">Glycogen branching enzyme</fullName>
        <shortName evidence="1">BE</shortName>
    </alternativeName>
</protein>
<gene>
    <name evidence="1" type="primary">glgB</name>
    <name type="ordered locus">SBO_3430</name>
</gene>
<dbReference type="EC" id="2.4.1.18" evidence="1"/>
<dbReference type="EMBL" id="CP000036">
    <property type="protein sequence ID" value="ABB67917.1"/>
    <property type="molecule type" value="Genomic_DNA"/>
</dbReference>
<dbReference type="RefSeq" id="WP_001283736.1">
    <property type="nucleotide sequence ID" value="NC_007613.1"/>
</dbReference>
<dbReference type="SMR" id="Q31VJ1"/>
<dbReference type="CAZy" id="CBM48">
    <property type="family name" value="Carbohydrate-Binding Module Family 48"/>
</dbReference>
<dbReference type="CAZy" id="GH13">
    <property type="family name" value="Glycoside Hydrolase Family 13"/>
</dbReference>
<dbReference type="KEGG" id="sbo:SBO_3430"/>
<dbReference type="HOGENOM" id="CLU_004245_3_2_6"/>
<dbReference type="UniPathway" id="UPA00164"/>
<dbReference type="Proteomes" id="UP000007067">
    <property type="component" value="Chromosome"/>
</dbReference>
<dbReference type="GO" id="GO:0005829">
    <property type="term" value="C:cytosol"/>
    <property type="evidence" value="ECO:0007669"/>
    <property type="project" value="TreeGrafter"/>
</dbReference>
<dbReference type="GO" id="GO:0003844">
    <property type="term" value="F:1,4-alpha-glucan branching enzyme activity"/>
    <property type="evidence" value="ECO:0007669"/>
    <property type="project" value="UniProtKB-UniRule"/>
</dbReference>
<dbReference type="GO" id="GO:0043169">
    <property type="term" value="F:cation binding"/>
    <property type="evidence" value="ECO:0007669"/>
    <property type="project" value="InterPro"/>
</dbReference>
<dbReference type="GO" id="GO:0004553">
    <property type="term" value="F:hydrolase activity, hydrolyzing O-glycosyl compounds"/>
    <property type="evidence" value="ECO:0007669"/>
    <property type="project" value="InterPro"/>
</dbReference>
<dbReference type="GO" id="GO:0005978">
    <property type="term" value="P:glycogen biosynthetic process"/>
    <property type="evidence" value="ECO:0007669"/>
    <property type="project" value="UniProtKB-UniRule"/>
</dbReference>
<dbReference type="CDD" id="cd11322">
    <property type="entry name" value="AmyAc_Glg_BE"/>
    <property type="match status" value="1"/>
</dbReference>
<dbReference type="CDD" id="cd02855">
    <property type="entry name" value="E_set_GBE_prok_N"/>
    <property type="match status" value="1"/>
</dbReference>
<dbReference type="FunFam" id="2.60.40.10:FF:000169">
    <property type="entry name" value="1,4-alpha-glucan branching enzyme GlgB"/>
    <property type="match status" value="1"/>
</dbReference>
<dbReference type="FunFam" id="2.60.40.10:FF:000331">
    <property type="entry name" value="1,4-alpha-glucan branching enzyme GlgB"/>
    <property type="match status" value="1"/>
</dbReference>
<dbReference type="FunFam" id="2.60.40.1180:FF:000002">
    <property type="entry name" value="1,4-alpha-glucan branching enzyme GlgB"/>
    <property type="match status" value="1"/>
</dbReference>
<dbReference type="FunFam" id="3.20.20.80:FF:000003">
    <property type="entry name" value="1,4-alpha-glucan branching enzyme GlgB"/>
    <property type="match status" value="1"/>
</dbReference>
<dbReference type="Gene3D" id="3.20.20.80">
    <property type="entry name" value="Glycosidases"/>
    <property type="match status" value="1"/>
</dbReference>
<dbReference type="Gene3D" id="2.60.40.1180">
    <property type="entry name" value="Golgi alpha-mannosidase II"/>
    <property type="match status" value="1"/>
</dbReference>
<dbReference type="Gene3D" id="2.60.40.10">
    <property type="entry name" value="Immunoglobulins"/>
    <property type="match status" value="2"/>
</dbReference>
<dbReference type="HAMAP" id="MF_00685">
    <property type="entry name" value="GlgB"/>
    <property type="match status" value="1"/>
</dbReference>
<dbReference type="InterPro" id="IPR006048">
    <property type="entry name" value="A-amylase/branching_C"/>
</dbReference>
<dbReference type="InterPro" id="IPR037439">
    <property type="entry name" value="Branching_enzy"/>
</dbReference>
<dbReference type="InterPro" id="IPR006407">
    <property type="entry name" value="GlgB"/>
</dbReference>
<dbReference type="InterPro" id="IPR054169">
    <property type="entry name" value="GlgB_N"/>
</dbReference>
<dbReference type="InterPro" id="IPR044143">
    <property type="entry name" value="GlgB_N_E_set_prok"/>
</dbReference>
<dbReference type="InterPro" id="IPR006047">
    <property type="entry name" value="Glyco_hydro_13_cat_dom"/>
</dbReference>
<dbReference type="InterPro" id="IPR004193">
    <property type="entry name" value="Glyco_hydro_13_N"/>
</dbReference>
<dbReference type="InterPro" id="IPR013780">
    <property type="entry name" value="Glyco_hydro_b"/>
</dbReference>
<dbReference type="InterPro" id="IPR017853">
    <property type="entry name" value="Glycoside_hydrolase_SF"/>
</dbReference>
<dbReference type="InterPro" id="IPR013783">
    <property type="entry name" value="Ig-like_fold"/>
</dbReference>
<dbReference type="InterPro" id="IPR014756">
    <property type="entry name" value="Ig_E-set"/>
</dbReference>
<dbReference type="NCBIfam" id="TIGR01515">
    <property type="entry name" value="branching_enzym"/>
    <property type="match status" value="1"/>
</dbReference>
<dbReference type="NCBIfam" id="NF003811">
    <property type="entry name" value="PRK05402.1"/>
    <property type="match status" value="1"/>
</dbReference>
<dbReference type="NCBIfam" id="NF008967">
    <property type="entry name" value="PRK12313.1"/>
    <property type="match status" value="1"/>
</dbReference>
<dbReference type="PANTHER" id="PTHR43651">
    <property type="entry name" value="1,4-ALPHA-GLUCAN-BRANCHING ENZYME"/>
    <property type="match status" value="1"/>
</dbReference>
<dbReference type="PANTHER" id="PTHR43651:SF3">
    <property type="entry name" value="1,4-ALPHA-GLUCAN-BRANCHING ENZYME"/>
    <property type="match status" value="1"/>
</dbReference>
<dbReference type="Pfam" id="PF00128">
    <property type="entry name" value="Alpha-amylase"/>
    <property type="match status" value="1"/>
</dbReference>
<dbReference type="Pfam" id="PF02806">
    <property type="entry name" value="Alpha-amylase_C"/>
    <property type="match status" value="1"/>
</dbReference>
<dbReference type="Pfam" id="PF02922">
    <property type="entry name" value="CBM_48"/>
    <property type="match status" value="1"/>
</dbReference>
<dbReference type="Pfam" id="PF22019">
    <property type="entry name" value="GlgB_N"/>
    <property type="match status" value="1"/>
</dbReference>
<dbReference type="PIRSF" id="PIRSF000463">
    <property type="entry name" value="GlgB"/>
    <property type="match status" value="1"/>
</dbReference>
<dbReference type="SMART" id="SM00642">
    <property type="entry name" value="Aamy"/>
    <property type="match status" value="1"/>
</dbReference>
<dbReference type="SUPFAM" id="SSF51445">
    <property type="entry name" value="(Trans)glycosidases"/>
    <property type="match status" value="1"/>
</dbReference>
<dbReference type="SUPFAM" id="SSF81296">
    <property type="entry name" value="E set domains"/>
    <property type="match status" value="2"/>
</dbReference>
<dbReference type="SUPFAM" id="SSF51011">
    <property type="entry name" value="Glycosyl hydrolase domain"/>
    <property type="match status" value="1"/>
</dbReference>